<gene>
    <name type="ORF">DDB_G0274469</name>
</gene>
<keyword id="KW-1185">Reference proteome</keyword>
<protein>
    <recommendedName>
        <fullName>Uncharacterized protein DDB_G0274469</fullName>
    </recommendedName>
</protein>
<feature type="chain" id="PRO_0000348138" description="Uncharacterized protein DDB_G0274469">
    <location>
        <begin position="1"/>
        <end position="104"/>
    </location>
</feature>
<feature type="region of interest" description="Disordered" evidence="1">
    <location>
        <begin position="1"/>
        <end position="20"/>
    </location>
</feature>
<feature type="region of interest" description="Disordered" evidence="1">
    <location>
        <begin position="83"/>
        <end position="104"/>
    </location>
</feature>
<feature type="compositionally biased region" description="Low complexity" evidence="1">
    <location>
        <begin position="83"/>
        <end position="93"/>
    </location>
</feature>
<feature type="compositionally biased region" description="Basic residues" evidence="1">
    <location>
        <begin position="94"/>
        <end position="104"/>
    </location>
</feature>
<evidence type="ECO:0000256" key="1">
    <source>
        <dbReference type="SAM" id="MobiDB-lite"/>
    </source>
</evidence>
<reference key="1">
    <citation type="journal article" date="2002" name="Nature">
        <title>Sequence and analysis of chromosome 2 of Dictyostelium discoideum.</title>
        <authorList>
            <person name="Gloeckner G."/>
            <person name="Eichinger L."/>
            <person name="Szafranski K."/>
            <person name="Pachebat J.A."/>
            <person name="Bankier A.T."/>
            <person name="Dear P.H."/>
            <person name="Lehmann R."/>
            <person name="Baumgart C."/>
            <person name="Parra G."/>
            <person name="Abril J.F."/>
            <person name="Guigo R."/>
            <person name="Kumpf K."/>
            <person name="Tunggal B."/>
            <person name="Cox E.C."/>
            <person name="Quail M.A."/>
            <person name="Platzer M."/>
            <person name="Rosenthal A."/>
            <person name="Noegel A.A."/>
        </authorList>
    </citation>
    <scope>NUCLEOTIDE SEQUENCE [LARGE SCALE GENOMIC DNA]</scope>
    <source>
        <strain>AX4</strain>
    </source>
</reference>
<reference key="2">
    <citation type="journal article" date="2005" name="Nature">
        <title>The genome of the social amoeba Dictyostelium discoideum.</title>
        <authorList>
            <person name="Eichinger L."/>
            <person name="Pachebat J.A."/>
            <person name="Gloeckner G."/>
            <person name="Rajandream M.A."/>
            <person name="Sucgang R."/>
            <person name="Berriman M."/>
            <person name="Song J."/>
            <person name="Olsen R."/>
            <person name="Szafranski K."/>
            <person name="Xu Q."/>
            <person name="Tunggal B."/>
            <person name="Kummerfeld S."/>
            <person name="Madera M."/>
            <person name="Konfortov B.A."/>
            <person name="Rivero F."/>
            <person name="Bankier A.T."/>
            <person name="Lehmann R."/>
            <person name="Hamlin N."/>
            <person name="Davies R."/>
            <person name="Gaudet P."/>
            <person name="Fey P."/>
            <person name="Pilcher K."/>
            <person name="Chen G."/>
            <person name="Saunders D."/>
            <person name="Sodergren E.J."/>
            <person name="Davis P."/>
            <person name="Kerhornou A."/>
            <person name="Nie X."/>
            <person name="Hall N."/>
            <person name="Anjard C."/>
            <person name="Hemphill L."/>
            <person name="Bason N."/>
            <person name="Farbrother P."/>
            <person name="Desany B."/>
            <person name="Just E."/>
            <person name="Morio T."/>
            <person name="Rost R."/>
            <person name="Churcher C.M."/>
            <person name="Cooper J."/>
            <person name="Haydock S."/>
            <person name="van Driessche N."/>
            <person name="Cronin A."/>
            <person name="Goodhead I."/>
            <person name="Muzny D.M."/>
            <person name="Mourier T."/>
            <person name="Pain A."/>
            <person name="Lu M."/>
            <person name="Harper D."/>
            <person name="Lindsay R."/>
            <person name="Hauser H."/>
            <person name="James K.D."/>
            <person name="Quiles M."/>
            <person name="Madan Babu M."/>
            <person name="Saito T."/>
            <person name="Buchrieser C."/>
            <person name="Wardroper A."/>
            <person name="Felder M."/>
            <person name="Thangavelu M."/>
            <person name="Johnson D."/>
            <person name="Knights A."/>
            <person name="Loulseged H."/>
            <person name="Mungall K.L."/>
            <person name="Oliver K."/>
            <person name="Price C."/>
            <person name="Quail M.A."/>
            <person name="Urushihara H."/>
            <person name="Hernandez J."/>
            <person name="Rabbinowitsch E."/>
            <person name="Steffen D."/>
            <person name="Sanders M."/>
            <person name="Ma J."/>
            <person name="Kohara Y."/>
            <person name="Sharp S."/>
            <person name="Simmonds M.N."/>
            <person name="Spiegler S."/>
            <person name="Tivey A."/>
            <person name="Sugano S."/>
            <person name="White B."/>
            <person name="Walker D."/>
            <person name="Woodward J.R."/>
            <person name="Winckler T."/>
            <person name="Tanaka Y."/>
            <person name="Shaulsky G."/>
            <person name="Schleicher M."/>
            <person name="Weinstock G.M."/>
            <person name="Rosenthal A."/>
            <person name="Cox E.C."/>
            <person name="Chisholm R.L."/>
            <person name="Gibbs R.A."/>
            <person name="Loomis W.F."/>
            <person name="Platzer M."/>
            <person name="Kay R.R."/>
            <person name="Williams J.G."/>
            <person name="Dear P.H."/>
            <person name="Noegel A.A."/>
            <person name="Barrell B.G."/>
            <person name="Kuspa A."/>
        </authorList>
    </citation>
    <scope>NUCLEOTIDE SEQUENCE [LARGE SCALE GENOMIC DNA]</scope>
    <source>
        <strain>AX4</strain>
    </source>
</reference>
<organism>
    <name type="scientific">Dictyostelium discoideum</name>
    <name type="common">Social amoeba</name>
    <dbReference type="NCBI Taxonomy" id="44689"/>
    <lineage>
        <taxon>Eukaryota</taxon>
        <taxon>Amoebozoa</taxon>
        <taxon>Evosea</taxon>
        <taxon>Eumycetozoa</taxon>
        <taxon>Dictyostelia</taxon>
        <taxon>Dictyosteliales</taxon>
        <taxon>Dictyosteliaceae</taxon>
        <taxon>Dictyostelium</taxon>
    </lineage>
</organism>
<dbReference type="EMBL" id="AAFI02000012">
    <property type="protein sequence ID" value="EAL70127.1"/>
    <property type="molecule type" value="Genomic_DNA"/>
</dbReference>
<dbReference type="RefSeq" id="XP_644151.1">
    <property type="nucleotide sequence ID" value="XM_639059.1"/>
</dbReference>
<dbReference type="PaxDb" id="44689-DDB0167677"/>
<dbReference type="EnsemblProtists" id="EAL70127">
    <property type="protein sequence ID" value="EAL70127"/>
    <property type="gene ID" value="DDB_G0274469"/>
</dbReference>
<dbReference type="GeneID" id="8619580"/>
<dbReference type="KEGG" id="ddi:DDB_G0274469"/>
<dbReference type="dictyBase" id="DDB_G0274469"/>
<dbReference type="HOGENOM" id="CLU_2255235_0_0_1"/>
<dbReference type="InParanoid" id="Q86HQ8"/>
<dbReference type="PRO" id="PR:Q86HQ8"/>
<dbReference type="Proteomes" id="UP000002195">
    <property type="component" value="Chromosome 2"/>
</dbReference>
<proteinExistence type="predicted"/>
<sequence>MTETSTAKVATTKKSTTTRKPFSLQGVITHSSSRTIIKAPERLADQPPVASKVVRKKSTTTVKPTTAIKKKVEKKKVVALKKTASASSSGKKVVASKKKVVAKK</sequence>
<name>Y7677_DICDI</name>
<accession>Q86HQ8</accession>
<accession>Q555C2</accession>